<gene>
    <name evidence="1" type="primary">araG</name>
    <name type="ordered locus">Bxeno_A3848</name>
    <name type="ORF">Bxe_A0547</name>
</gene>
<dbReference type="EC" id="7.5.2.12" evidence="1"/>
<dbReference type="EMBL" id="CP000270">
    <property type="protein sequence ID" value="ABE32386.1"/>
    <property type="molecule type" value="Genomic_DNA"/>
</dbReference>
<dbReference type="RefSeq" id="WP_011489864.1">
    <property type="nucleotide sequence ID" value="NC_007951.1"/>
</dbReference>
<dbReference type="SMR" id="Q13U53"/>
<dbReference type="STRING" id="266265.Bxe_A0547"/>
<dbReference type="KEGG" id="bxb:DR64_2722"/>
<dbReference type="KEGG" id="bxe:Bxe_A0547"/>
<dbReference type="PATRIC" id="fig|266265.5.peg.4067"/>
<dbReference type="eggNOG" id="COG1129">
    <property type="taxonomic scope" value="Bacteria"/>
</dbReference>
<dbReference type="OrthoDB" id="9776369at2"/>
<dbReference type="Proteomes" id="UP000001817">
    <property type="component" value="Chromosome 1"/>
</dbReference>
<dbReference type="GO" id="GO:0005886">
    <property type="term" value="C:plasma membrane"/>
    <property type="evidence" value="ECO:0007669"/>
    <property type="project" value="UniProtKB-SubCell"/>
</dbReference>
<dbReference type="GO" id="GO:0015612">
    <property type="term" value="F:ABC-type L-arabinose transporter activity"/>
    <property type="evidence" value="ECO:0007669"/>
    <property type="project" value="UniProtKB-EC"/>
</dbReference>
<dbReference type="GO" id="GO:0005524">
    <property type="term" value="F:ATP binding"/>
    <property type="evidence" value="ECO:0007669"/>
    <property type="project" value="UniProtKB-KW"/>
</dbReference>
<dbReference type="GO" id="GO:0016887">
    <property type="term" value="F:ATP hydrolysis activity"/>
    <property type="evidence" value="ECO:0007669"/>
    <property type="project" value="InterPro"/>
</dbReference>
<dbReference type="CDD" id="cd03216">
    <property type="entry name" value="ABC_Carb_Monos_I"/>
    <property type="match status" value="1"/>
</dbReference>
<dbReference type="CDD" id="cd03215">
    <property type="entry name" value="ABC_Carb_Monos_II"/>
    <property type="match status" value="1"/>
</dbReference>
<dbReference type="FunFam" id="3.40.50.300:FF:000126">
    <property type="entry name" value="Galactose/methyl galactoside import ATP-binding protein MglA"/>
    <property type="match status" value="1"/>
</dbReference>
<dbReference type="FunFam" id="3.40.50.300:FF:000127">
    <property type="entry name" value="Ribose import ATP-binding protein RbsA"/>
    <property type="match status" value="1"/>
</dbReference>
<dbReference type="Gene3D" id="3.40.50.300">
    <property type="entry name" value="P-loop containing nucleotide triphosphate hydrolases"/>
    <property type="match status" value="2"/>
</dbReference>
<dbReference type="InterPro" id="IPR003593">
    <property type="entry name" value="AAA+_ATPase"/>
</dbReference>
<dbReference type="InterPro" id="IPR050107">
    <property type="entry name" value="ABC_carbohydrate_import_ATPase"/>
</dbReference>
<dbReference type="InterPro" id="IPR003439">
    <property type="entry name" value="ABC_transporter-like_ATP-bd"/>
</dbReference>
<dbReference type="InterPro" id="IPR017871">
    <property type="entry name" value="ABC_transporter-like_CS"/>
</dbReference>
<dbReference type="InterPro" id="IPR027417">
    <property type="entry name" value="P-loop_NTPase"/>
</dbReference>
<dbReference type="NCBIfam" id="NF008442">
    <property type="entry name" value="PRK11288.1"/>
    <property type="match status" value="1"/>
</dbReference>
<dbReference type="PANTHER" id="PTHR43790:SF6">
    <property type="entry name" value="ARABINOSE IMPORT ATP-BINDING PROTEIN ARAG"/>
    <property type="match status" value="1"/>
</dbReference>
<dbReference type="PANTHER" id="PTHR43790">
    <property type="entry name" value="CARBOHYDRATE TRANSPORT ATP-BINDING PROTEIN MG119-RELATED"/>
    <property type="match status" value="1"/>
</dbReference>
<dbReference type="Pfam" id="PF00005">
    <property type="entry name" value="ABC_tran"/>
    <property type="match status" value="2"/>
</dbReference>
<dbReference type="SMART" id="SM00382">
    <property type="entry name" value="AAA"/>
    <property type="match status" value="2"/>
</dbReference>
<dbReference type="SUPFAM" id="SSF52540">
    <property type="entry name" value="P-loop containing nucleoside triphosphate hydrolases"/>
    <property type="match status" value="2"/>
</dbReference>
<dbReference type="PROSITE" id="PS00211">
    <property type="entry name" value="ABC_TRANSPORTER_1"/>
    <property type="match status" value="1"/>
</dbReference>
<dbReference type="PROSITE" id="PS50893">
    <property type="entry name" value="ABC_TRANSPORTER_2"/>
    <property type="match status" value="2"/>
</dbReference>
<dbReference type="PROSITE" id="PS51268">
    <property type="entry name" value="ARAG"/>
    <property type="match status" value="1"/>
</dbReference>
<sequence>MSATLRFDNIGKVFPGVRALDGVSFDVNVGQVHGLMGENGAGKSTLLKILGGEYQPDSGRVMIDGNEVRFTSAASSIAAGIAVIHQELQYVPDLTVAENLLLGQLPNSLGWVNKREAKRFVRERLEAMGVALDPNAKLRKLSIAQRQMVEICKALLRNARVIALDEPTSSLSHRETEVLFKLVRDLRADNRAMIYISHRMDEIYELCDACTIFRDGRKIASHPTLEGVSRDTIVSEMVGREISDIYNYSARPLGEVRFAAKAIEGHALAQPASFEVRRGEIVGFFGLVGAGRSELMHLVYGADRKKGGELTLDGKPIKVRSAGEAIRHGIVLCPEDRKEEGIVAMASVSENINISCRRHYLRAGMFLDRKKEAETADRFIKLLKIKTPSRRQKIRFLSGGNQQKAILSRWLAEPDLKVVILDEPTRGIDVGAKHEIYNVIYQLAERGCAIVMISSELPEVLGVSDRIVVMRQGRISGELARQDATEQSVLSLALPQSSTALPGTDAGTETAAQQAA</sequence>
<comment type="function">
    <text evidence="1">Part of the ABC transporter complex AraFGH involved in arabinose import. Responsible for energy coupling to the transport system.</text>
</comment>
<comment type="catalytic activity">
    <reaction evidence="1">
        <text>L-arabinose(out) + ATP + H2O = L-arabinose(in) + ADP + phosphate + H(+)</text>
        <dbReference type="Rhea" id="RHEA:30007"/>
        <dbReference type="ChEBI" id="CHEBI:15377"/>
        <dbReference type="ChEBI" id="CHEBI:15378"/>
        <dbReference type="ChEBI" id="CHEBI:17535"/>
        <dbReference type="ChEBI" id="CHEBI:30616"/>
        <dbReference type="ChEBI" id="CHEBI:43474"/>
        <dbReference type="ChEBI" id="CHEBI:456216"/>
        <dbReference type="EC" id="7.5.2.12"/>
    </reaction>
</comment>
<comment type="subunit">
    <text evidence="1">The complex is composed of two ATP-binding proteins (AraG), two transmembrane proteins (AraH) and a solute-binding protein (AraF).</text>
</comment>
<comment type="subcellular location">
    <subcellularLocation>
        <location evidence="1">Cell inner membrane</location>
        <topology evidence="1">Peripheral membrane protein</topology>
    </subcellularLocation>
</comment>
<comment type="similarity">
    <text evidence="1">Belongs to the ABC transporter superfamily. Arabinose importer (TC 3.A.1.2.2) family.</text>
</comment>
<organism>
    <name type="scientific">Paraburkholderia xenovorans (strain LB400)</name>
    <dbReference type="NCBI Taxonomy" id="266265"/>
    <lineage>
        <taxon>Bacteria</taxon>
        <taxon>Pseudomonadati</taxon>
        <taxon>Pseudomonadota</taxon>
        <taxon>Betaproteobacteria</taxon>
        <taxon>Burkholderiales</taxon>
        <taxon>Burkholderiaceae</taxon>
        <taxon>Paraburkholderia</taxon>
    </lineage>
</organism>
<proteinExistence type="inferred from homology"/>
<feature type="chain" id="PRO_0000270464" description="Arabinose import ATP-binding protein AraG">
    <location>
        <begin position="1"/>
        <end position="516"/>
    </location>
</feature>
<feature type="domain" description="ABC transporter 1" evidence="1">
    <location>
        <begin position="5"/>
        <end position="240"/>
    </location>
</feature>
<feature type="domain" description="ABC transporter 2" evidence="1">
    <location>
        <begin position="240"/>
        <end position="497"/>
    </location>
</feature>
<feature type="binding site" evidence="1">
    <location>
        <begin position="37"/>
        <end position="44"/>
    </location>
    <ligand>
        <name>ATP</name>
        <dbReference type="ChEBI" id="CHEBI:30616"/>
    </ligand>
</feature>
<protein>
    <recommendedName>
        <fullName evidence="1">Arabinose import ATP-binding protein AraG</fullName>
        <ecNumber evidence="1">7.5.2.12</ecNumber>
    </recommendedName>
</protein>
<name>ARAG_PARXL</name>
<evidence type="ECO:0000255" key="1">
    <source>
        <dbReference type="HAMAP-Rule" id="MF_01721"/>
    </source>
</evidence>
<reference key="1">
    <citation type="journal article" date="2006" name="Proc. Natl. Acad. Sci. U.S.A.">
        <title>Burkholderia xenovorans LB400 harbors a multi-replicon, 9.73-Mbp genome shaped for versatility.</title>
        <authorList>
            <person name="Chain P.S.G."/>
            <person name="Denef V.J."/>
            <person name="Konstantinidis K.T."/>
            <person name="Vergez L.M."/>
            <person name="Agullo L."/>
            <person name="Reyes V.L."/>
            <person name="Hauser L."/>
            <person name="Cordova M."/>
            <person name="Gomez L."/>
            <person name="Gonzalez M."/>
            <person name="Land M."/>
            <person name="Lao V."/>
            <person name="Larimer F."/>
            <person name="LiPuma J.J."/>
            <person name="Mahenthiralingam E."/>
            <person name="Malfatti S.A."/>
            <person name="Marx C.J."/>
            <person name="Parnell J.J."/>
            <person name="Ramette A."/>
            <person name="Richardson P."/>
            <person name="Seeger M."/>
            <person name="Smith D."/>
            <person name="Spilker T."/>
            <person name="Sul W.J."/>
            <person name="Tsoi T.V."/>
            <person name="Ulrich L.E."/>
            <person name="Zhulin I.B."/>
            <person name="Tiedje J.M."/>
        </authorList>
    </citation>
    <scope>NUCLEOTIDE SEQUENCE [LARGE SCALE GENOMIC DNA]</scope>
    <source>
        <strain>LB400</strain>
    </source>
</reference>
<keyword id="KW-0067">ATP-binding</keyword>
<keyword id="KW-0997">Cell inner membrane</keyword>
<keyword id="KW-1003">Cell membrane</keyword>
<keyword id="KW-0472">Membrane</keyword>
<keyword id="KW-0547">Nucleotide-binding</keyword>
<keyword id="KW-1185">Reference proteome</keyword>
<keyword id="KW-0677">Repeat</keyword>
<keyword id="KW-0762">Sugar transport</keyword>
<keyword id="KW-1278">Translocase</keyword>
<keyword id="KW-0813">Transport</keyword>
<accession>Q13U53</accession>